<organism>
    <name type="scientific">Homo sapiens</name>
    <name type="common">Human</name>
    <dbReference type="NCBI Taxonomy" id="9606"/>
    <lineage>
        <taxon>Eukaryota</taxon>
        <taxon>Metazoa</taxon>
        <taxon>Chordata</taxon>
        <taxon>Craniata</taxon>
        <taxon>Vertebrata</taxon>
        <taxon>Euteleostomi</taxon>
        <taxon>Mammalia</taxon>
        <taxon>Eutheria</taxon>
        <taxon>Euarchontoglires</taxon>
        <taxon>Primates</taxon>
        <taxon>Haplorrhini</taxon>
        <taxon>Catarrhini</taxon>
        <taxon>Hominidae</taxon>
        <taxon>Homo</taxon>
    </lineage>
</organism>
<sequence length="150" mass="16880">MDSRKLSPRGKKLESHLSQEHRRPPLGLIAAWGQPSIQSSVQQGLQTQDWVCEPPERRRPGRRWSVSIDERRRLATLGGRERPGAAGTQLHCRDVVQMVAQLVSEDVDKDVLLPHPLRSTESTNAFQAFLARSAPFWHNATFEASRSPPS</sequence>
<proteinExistence type="evidence at protein level"/>
<evidence type="ECO:0000250" key="1"/>
<evidence type="ECO:0000256" key="2">
    <source>
        <dbReference type="SAM" id="MobiDB-lite"/>
    </source>
</evidence>
<comment type="subcellular location">
    <subcellularLocation>
        <location evidence="1">Cytoplasm</location>
    </subcellularLocation>
    <subcellularLocation>
        <location evidence="1">Cytoplasmic vesicle</location>
        <location evidence="1">Secretory vesicle</location>
        <location evidence="1">Acrosome</location>
    </subcellularLocation>
</comment>
<name>TEX22_HUMAN</name>
<reference key="1">
    <citation type="submission" date="2004-03" db="EMBL/GenBank/DDBJ databases">
        <title>Full-length cDNA libraries and normalization.</title>
        <authorList>
            <person name="Li W.B."/>
            <person name="Gruber C."/>
            <person name="Jessee J."/>
            <person name="Polayes D."/>
        </authorList>
    </citation>
    <scope>NUCLEOTIDE SEQUENCE [LARGE SCALE MRNA]</scope>
    <source>
        <tissue>Placenta</tissue>
    </source>
</reference>
<reference key="2">
    <citation type="journal article" date="2003" name="Nature">
        <title>The DNA sequence and analysis of human chromosome 14.</title>
        <authorList>
            <person name="Heilig R."/>
            <person name="Eckenberg R."/>
            <person name="Petit J.-L."/>
            <person name="Fonknechten N."/>
            <person name="Da Silva C."/>
            <person name="Cattolico L."/>
            <person name="Levy M."/>
            <person name="Barbe V."/>
            <person name="De Berardinis V."/>
            <person name="Ureta-Vidal A."/>
            <person name="Pelletier E."/>
            <person name="Vico V."/>
            <person name="Anthouard V."/>
            <person name="Rowen L."/>
            <person name="Madan A."/>
            <person name="Qin S."/>
            <person name="Sun H."/>
            <person name="Du H."/>
            <person name="Pepin K."/>
            <person name="Artiguenave F."/>
            <person name="Robert C."/>
            <person name="Cruaud C."/>
            <person name="Bruels T."/>
            <person name="Jaillon O."/>
            <person name="Friedlander L."/>
            <person name="Samson G."/>
            <person name="Brottier P."/>
            <person name="Cure S."/>
            <person name="Segurens B."/>
            <person name="Aniere F."/>
            <person name="Samain S."/>
            <person name="Crespeau H."/>
            <person name="Abbasi N."/>
            <person name="Aiach N."/>
            <person name="Boscus D."/>
            <person name="Dickhoff R."/>
            <person name="Dors M."/>
            <person name="Dubois I."/>
            <person name="Friedman C."/>
            <person name="Gouyvenoux M."/>
            <person name="James R."/>
            <person name="Madan A."/>
            <person name="Mairey-Estrada B."/>
            <person name="Mangenot S."/>
            <person name="Martins N."/>
            <person name="Menard M."/>
            <person name="Oztas S."/>
            <person name="Ratcliffe A."/>
            <person name="Shaffer T."/>
            <person name="Trask B."/>
            <person name="Vacherie B."/>
            <person name="Bellemere C."/>
            <person name="Belser C."/>
            <person name="Besnard-Gonnet M."/>
            <person name="Bartol-Mavel D."/>
            <person name="Boutard M."/>
            <person name="Briez-Silla S."/>
            <person name="Combette S."/>
            <person name="Dufosse-Laurent V."/>
            <person name="Ferron C."/>
            <person name="Lechaplais C."/>
            <person name="Louesse C."/>
            <person name="Muselet D."/>
            <person name="Magdelenat G."/>
            <person name="Pateau E."/>
            <person name="Petit E."/>
            <person name="Sirvain-Trukniewicz P."/>
            <person name="Trybou A."/>
            <person name="Vega-Czarny N."/>
            <person name="Bataille E."/>
            <person name="Bluet E."/>
            <person name="Bordelais I."/>
            <person name="Dubois M."/>
            <person name="Dumont C."/>
            <person name="Guerin T."/>
            <person name="Haffray S."/>
            <person name="Hammadi R."/>
            <person name="Muanga J."/>
            <person name="Pellouin V."/>
            <person name="Robert D."/>
            <person name="Wunderle E."/>
            <person name="Gauguet G."/>
            <person name="Roy A."/>
            <person name="Sainte-Marthe L."/>
            <person name="Verdier J."/>
            <person name="Verdier-Discala C."/>
            <person name="Hillier L.W."/>
            <person name="Fulton L."/>
            <person name="McPherson J."/>
            <person name="Matsuda F."/>
            <person name="Wilson R."/>
            <person name="Scarpelli C."/>
            <person name="Gyapay G."/>
            <person name="Wincker P."/>
            <person name="Saurin W."/>
            <person name="Quetier F."/>
            <person name="Waterston R."/>
            <person name="Hood L."/>
            <person name="Weissenbach J."/>
        </authorList>
    </citation>
    <scope>NUCLEOTIDE SEQUENCE [LARGE SCALE GENOMIC DNA]</scope>
</reference>
<keyword id="KW-0963">Cytoplasm</keyword>
<keyword id="KW-0968">Cytoplasmic vesicle</keyword>
<keyword id="KW-1267">Proteomics identification</keyword>
<keyword id="KW-1185">Reference proteome</keyword>
<feature type="chain" id="PRO_0000410917" description="Testis-expressed protein 22">
    <location>
        <begin position="1"/>
        <end position="150"/>
    </location>
</feature>
<feature type="region of interest" description="Disordered" evidence="2">
    <location>
        <begin position="1"/>
        <end position="26"/>
    </location>
</feature>
<feature type="compositionally biased region" description="Basic and acidic residues" evidence="2">
    <location>
        <begin position="1"/>
        <end position="23"/>
    </location>
</feature>
<dbReference type="EMBL" id="BX378619">
    <property type="status" value="NOT_ANNOTATED_CDS"/>
    <property type="molecule type" value="mRNA"/>
</dbReference>
<dbReference type="EMBL" id="AL928654">
    <property type="status" value="NOT_ANNOTATED_CDS"/>
    <property type="molecule type" value="Genomic_DNA"/>
</dbReference>
<dbReference type="CCDS" id="CCDS53916.1"/>
<dbReference type="RefSeq" id="NP_001182011.1">
    <property type="nucleotide sequence ID" value="NM_001195082.2"/>
</dbReference>
<dbReference type="RefSeq" id="XP_006720297.1">
    <property type="nucleotide sequence ID" value="XM_006720234.4"/>
</dbReference>
<dbReference type="RefSeq" id="XP_054232592.1">
    <property type="nucleotide sequence ID" value="XM_054376617.1"/>
</dbReference>
<dbReference type="BioGRID" id="572084">
    <property type="interactions" value="2"/>
</dbReference>
<dbReference type="FunCoup" id="C9J3V5">
    <property type="interactions" value="1"/>
</dbReference>
<dbReference type="STRING" id="9606.ENSP00000397002"/>
<dbReference type="GlyGen" id="C9J3V5">
    <property type="glycosylation" value="1 site, 1 O-linked glycan (1 site)"/>
</dbReference>
<dbReference type="iPTMnet" id="C9J3V5"/>
<dbReference type="PhosphoSitePlus" id="C9J3V5"/>
<dbReference type="BioMuta" id="TEX22"/>
<dbReference type="MassIVE" id="C9J3V5"/>
<dbReference type="PaxDb" id="9606-ENSP00000397002"/>
<dbReference type="PeptideAtlas" id="C9J3V5"/>
<dbReference type="Antibodypedia" id="74215">
    <property type="antibodies" value="5 antibodies from 5 providers"/>
</dbReference>
<dbReference type="Ensembl" id="ENST00000451127.3">
    <property type="protein sequence ID" value="ENSP00000397002.2"/>
    <property type="gene ID" value="ENSG00000226174.7"/>
</dbReference>
<dbReference type="GeneID" id="647310"/>
<dbReference type="KEGG" id="hsa:647310"/>
<dbReference type="MANE-Select" id="ENST00000451127.3">
    <property type="protein sequence ID" value="ENSP00000397002.2"/>
    <property type="RefSeq nucleotide sequence ID" value="NM_001195082.2"/>
    <property type="RefSeq protein sequence ID" value="NP_001182011.1"/>
</dbReference>
<dbReference type="UCSC" id="uc001yqw.3">
    <property type="organism name" value="human"/>
</dbReference>
<dbReference type="AGR" id="HGNC:40026"/>
<dbReference type="CTD" id="647310"/>
<dbReference type="DisGeNET" id="647310"/>
<dbReference type="GeneCards" id="TEX22"/>
<dbReference type="HGNC" id="HGNC:40026">
    <property type="gene designation" value="TEX22"/>
</dbReference>
<dbReference type="HPA" id="ENSG00000226174">
    <property type="expression patterns" value="Tissue enriched (testis)"/>
</dbReference>
<dbReference type="neXtProt" id="NX_C9J3V5"/>
<dbReference type="OpenTargets" id="ENSG00000226174"/>
<dbReference type="VEuPathDB" id="HostDB:ENSG00000226174"/>
<dbReference type="eggNOG" id="ENOG502TE8V">
    <property type="taxonomic scope" value="Eukaryota"/>
</dbReference>
<dbReference type="GeneTree" id="ENSGT00520000061791"/>
<dbReference type="HOGENOM" id="CLU_1721772_0_0_1"/>
<dbReference type="InParanoid" id="C9J3V5"/>
<dbReference type="OMA" id="CEPPESK"/>
<dbReference type="OrthoDB" id="9836523at2759"/>
<dbReference type="PAN-GO" id="C9J3V5">
    <property type="GO annotations" value="0 GO annotations based on evolutionary models"/>
</dbReference>
<dbReference type="PhylomeDB" id="C9J3V5"/>
<dbReference type="TreeFam" id="TF339653"/>
<dbReference type="PathwayCommons" id="C9J3V5"/>
<dbReference type="SignaLink" id="C9J3V5"/>
<dbReference type="BioGRID-ORCS" id="647310">
    <property type="hits" value="11 hits in 1140 CRISPR screens"/>
</dbReference>
<dbReference type="ChiTaRS" id="TEX22">
    <property type="organism name" value="human"/>
</dbReference>
<dbReference type="GenomeRNAi" id="647310"/>
<dbReference type="Pharos" id="C9J3V5">
    <property type="development level" value="Tdark"/>
</dbReference>
<dbReference type="PRO" id="PR:C9J3V5"/>
<dbReference type="Proteomes" id="UP000005640">
    <property type="component" value="Chromosome 14"/>
</dbReference>
<dbReference type="RNAct" id="C9J3V5">
    <property type="molecule type" value="protein"/>
</dbReference>
<dbReference type="Bgee" id="ENSG00000226174">
    <property type="expression patterns" value="Expressed in left testis and 100 other cell types or tissues"/>
</dbReference>
<dbReference type="ExpressionAtlas" id="C9J3V5">
    <property type="expression patterns" value="baseline and differential"/>
</dbReference>
<dbReference type="GO" id="GO:0001669">
    <property type="term" value="C:acrosomal vesicle"/>
    <property type="evidence" value="ECO:0007669"/>
    <property type="project" value="UniProtKB-SubCell"/>
</dbReference>
<gene>
    <name type="primary">TEX22</name>
</gene>
<accession>C9J3V5</accession>
<protein>
    <recommendedName>
        <fullName>Testis-expressed protein 22</fullName>
    </recommendedName>
</protein>